<protein>
    <recommendedName>
        <fullName>Interleukin-6</fullName>
        <shortName>IL-6</shortName>
    </recommendedName>
</protein>
<comment type="function">
    <text evidence="2">Cytokine with a wide variety of biological functions in immunity, tissue regeneration, and metabolism. Binds to IL6R, then the complex associates to the signaling subunit IL6ST/gp130 to trigger the intracellular IL6-signaling pathway. The interaction with the membrane-bound IL6R and IL6ST stimulates 'classic signaling', whereas the binding of IL6 and soluble IL6R to IL6ST stimulates 'trans-signaling'. Alternatively, 'cluster signaling' occurs when membrane-bound IL6:IL6R complexes on transmitter cells activate IL6ST receptors on neighboring receiver cells.</text>
</comment>
<comment type="function">
    <text evidence="2 3">IL6 is a potent inducer of the acute phase response. Rapid production of IL6 contributes to host defense during infection and tissue injury, but excessive IL6 synthesis is involved in disease pathology. In the innate immune response, is synthesized by myeloid cells, such as macrophages and dendritic cells, upon recognition of pathogens through toll-like receptors (TLRs) at the site of infection or tissue injury (By similarity). In the adaptive immune response, is required for the differentiation of B cells into immunoglobulin-secreting cells. Plays a major role in the differentiation of CD4(+) T cell subsets. Essential factor for the development of T follicular helper (Tfh) cells that are required for the induction of germinal-center formation. Required to drive naive CD4(+) T cells to the Th17 lineage. Also required for proliferation of myeloma cells and the survival of plasmablast cells (By similarity).</text>
</comment>
<comment type="function">
    <text evidence="2 3">Acts as an essential factor in bone homeostasis and on vessels directly or indirectly by induction of VEGF, resulting in increased angiogenesis activity and vascular permeability. Induces, through 'trans-signaling' and synergistically with IL1B and TNF, the production of VEGF. Involved in metabolic controls, is discharged into the bloodstream after muscle contraction increasing lipolysis and improving insulin resistance (By similarity). 'Trans-signaling' in central nervous system also regulates energy and glucose homeostasis. Mediates, through GLP-1, crosstalk between insulin-sensitive tissues, intestinal L cells and pancreatic islets to adapt to changes in insulin demand (By similarity). Also acts as a myokine (By similarity). Plays a protective role during liver injury, being required for maintenance of tissue regeneration (By similarity). Also has a pivotal role in iron metabolism by regulating HAMP/hepcidin expression upon inflammation or bacterial infection (By similarity). Through activation of IL6ST-YAP-NOTCH pathway, induces inflammation-induced epithelial regeneration (By similarity).</text>
</comment>
<comment type="subunit">
    <text evidence="2">Component of a hexamer of two molecules each of IL6, IL6R and IL6ST; first binds to IL6R to associate with the signaling subunit IL6ST. Interacts with IL6R (via the N-terminal ectodomain); this interaction may be affected by IL6R-binding with SORL1, hence decreasing IL6 cis signaling. Interacts with SORL1 (via the N-terminal ectodomain); this interaction leads to IL6 internalization and lysosomal degradation. May form a trimeric complex with the soluble SORL1 ectodomain and soluble IL6R receptor; this interaction might stabilize circulating IL6, hence promoting IL6 trans signaling.</text>
</comment>
<comment type="subcellular location">
    <subcellularLocation>
        <location evidence="2">Secreted</location>
    </subcellularLocation>
</comment>
<comment type="similarity">
    <text evidence="4">Belongs to the IL-6 superfamily.</text>
</comment>
<evidence type="ECO:0000250" key="1"/>
<evidence type="ECO:0000250" key="2">
    <source>
        <dbReference type="UniProtKB" id="P05231"/>
    </source>
</evidence>
<evidence type="ECO:0000250" key="3">
    <source>
        <dbReference type="UniProtKB" id="P08505"/>
    </source>
</evidence>
<evidence type="ECO:0000305" key="4"/>
<feature type="chain" id="PRO_0000058761" description="Interleukin-6">
    <location>
        <begin position="1" status="less than"/>
        <end position="125"/>
    </location>
</feature>
<feature type="disulfide bond" evidence="1">
    <location>
        <begin position="16"/>
        <end position="26"/>
    </location>
</feature>
<feature type="non-terminal residue">
    <location>
        <position position="1"/>
    </location>
</feature>
<dbReference type="EMBL" id="L34165">
    <property type="protein sequence ID" value="AAA96829.1"/>
    <property type="molecule type" value="mRNA"/>
</dbReference>
<dbReference type="SMR" id="P41693"/>
<dbReference type="Proteomes" id="UP000694425">
    <property type="component" value="Unplaced"/>
</dbReference>
<dbReference type="GO" id="GO:0005615">
    <property type="term" value="C:extracellular space"/>
    <property type="evidence" value="ECO:0007669"/>
    <property type="project" value="UniProtKB-KW"/>
</dbReference>
<dbReference type="GO" id="GO:0005896">
    <property type="term" value="C:interleukin-6 receptor complex"/>
    <property type="evidence" value="ECO:0007669"/>
    <property type="project" value="TreeGrafter"/>
</dbReference>
<dbReference type="GO" id="GO:0005125">
    <property type="term" value="F:cytokine activity"/>
    <property type="evidence" value="ECO:0007669"/>
    <property type="project" value="UniProtKB-KW"/>
</dbReference>
<dbReference type="GO" id="GO:0008083">
    <property type="term" value="F:growth factor activity"/>
    <property type="evidence" value="ECO:0007669"/>
    <property type="project" value="UniProtKB-KW"/>
</dbReference>
<dbReference type="GO" id="GO:0005138">
    <property type="term" value="F:interleukin-6 receptor binding"/>
    <property type="evidence" value="ECO:0007669"/>
    <property type="project" value="InterPro"/>
</dbReference>
<dbReference type="GO" id="GO:0006953">
    <property type="term" value="P:acute-phase response"/>
    <property type="evidence" value="ECO:0007669"/>
    <property type="project" value="UniProtKB-KW"/>
</dbReference>
<dbReference type="GO" id="GO:0042593">
    <property type="term" value="P:glucose homeostasis"/>
    <property type="evidence" value="ECO:0000250"/>
    <property type="project" value="UniProtKB"/>
</dbReference>
<dbReference type="GO" id="GO:0072574">
    <property type="term" value="P:hepatocyte proliferation"/>
    <property type="evidence" value="ECO:0000250"/>
    <property type="project" value="UniProtKB"/>
</dbReference>
<dbReference type="GO" id="GO:0070102">
    <property type="term" value="P:interleukin-6-mediated signaling pathway"/>
    <property type="evidence" value="ECO:0000250"/>
    <property type="project" value="UniProtKB"/>
</dbReference>
<dbReference type="GO" id="GO:0097421">
    <property type="term" value="P:liver regeneration"/>
    <property type="evidence" value="ECO:0000250"/>
    <property type="project" value="UniProtKB"/>
</dbReference>
<dbReference type="GO" id="GO:0051240">
    <property type="term" value="P:positive regulation of multicellular organismal process"/>
    <property type="evidence" value="ECO:0007669"/>
    <property type="project" value="UniProtKB-ARBA"/>
</dbReference>
<dbReference type="GO" id="GO:0046427">
    <property type="term" value="P:positive regulation of receptor signaling pathway via JAK-STAT"/>
    <property type="evidence" value="ECO:0007669"/>
    <property type="project" value="TreeGrafter"/>
</dbReference>
<dbReference type="GO" id="GO:1904894">
    <property type="term" value="P:positive regulation of receptor signaling pathway via STAT"/>
    <property type="evidence" value="ECO:0000250"/>
    <property type="project" value="UniProtKB"/>
</dbReference>
<dbReference type="GO" id="GO:0070092">
    <property type="term" value="P:regulation of glucagon secretion"/>
    <property type="evidence" value="ECO:0000250"/>
    <property type="project" value="UniProtKB"/>
</dbReference>
<dbReference type="GO" id="GO:0050796">
    <property type="term" value="P:regulation of insulin secretion"/>
    <property type="evidence" value="ECO:0000250"/>
    <property type="project" value="UniProtKB"/>
</dbReference>
<dbReference type="GO" id="GO:0014823">
    <property type="term" value="P:response to activity"/>
    <property type="evidence" value="ECO:0000250"/>
    <property type="project" value="UniProtKB"/>
</dbReference>
<dbReference type="GO" id="GO:0072540">
    <property type="term" value="P:T-helper 17 cell lineage commitment"/>
    <property type="evidence" value="ECO:0000250"/>
    <property type="project" value="UniProtKB"/>
</dbReference>
<dbReference type="GO" id="GO:0010573">
    <property type="term" value="P:vascular endothelial growth factor production"/>
    <property type="evidence" value="ECO:0000250"/>
    <property type="project" value="UniProtKB"/>
</dbReference>
<dbReference type="Gene3D" id="1.20.1250.10">
    <property type="match status" value="1"/>
</dbReference>
<dbReference type="InterPro" id="IPR009079">
    <property type="entry name" value="4_helix_cytokine-like_core"/>
</dbReference>
<dbReference type="InterPro" id="IPR003574">
    <property type="entry name" value="IL-6-like"/>
</dbReference>
<dbReference type="InterPro" id="IPR030474">
    <property type="entry name" value="IL-6/GCSF/MGF"/>
</dbReference>
<dbReference type="InterPro" id="IPR030473">
    <property type="entry name" value="IL6/GCSF/MGF_CS"/>
</dbReference>
<dbReference type="PANTHER" id="PTHR48494">
    <property type="entry name" value="INTERLEUKIN-6"/>
    <property type="match status" value="1"/>
</dbReference>
<dbReference type="PANTHER" id="PTHR48494:SF1">
    <property type="entry name" value="INTERLEUKIN-6"/>
    <property type="match status" value="1"/>
</dbReference>
<dbReference type="Pfam" id="PF00489">
    <property type="entry name" value="IL6"/>
    <property type="match status" value="1"/>
</dbReference>
<dbReference type="PRINTS" id="PR00433">
    <property type="entry name" value="IL6GCSFMGF"/>
</dbReference>
<dbReference type="PRINTS" id="PR00434">
    <property type="entry name" value="INTERLEUKIN6"/>
</dbReference>
<dbReference type="SMART" id="SM00126">
    <property type="entry name" value="IL6"/>
    <property type="match status" value="1"/>
</dbReference>
<dbReference type="SUPFAM" id="SSF47266">
    <property type="entry name" value="4-helical cytokines"/>
    <property type="match status" value="1"/>
</dbReference>
<dbReference type="PROSITE" id="PS00254">
    <property type="entry name" value="INTERLEUKIN_6"/>
    <property type="match status" value="1"/>
</dbReference>
<organism>
    <name type="scientific">Neovison vison</name>
    <name type="common">American mink</name>
    <name type="synonym">Mustela vison</name>
    <dbReference type="NCBI Taxonomy" id="452646"/>
    <lineage>
        <taxon>Eukaryota</taxon>
        <taxon>Metazoa</taxon>
        <taxon>Chordata</taxon>
        <taxon>Craniata</taxon>
        <taxon>Vertebrata</taxon>
        <taxon>Euteleostomi</taxon>
        <taxon>Mammalia</taxon>
        <taxon>Eutheria</taxon>
        <taxon>Laurasiatheria</taxon>
        <taxon>Carnivora</taxon>
        <taxon>Caniformia</taxon>
        <taxon>Musteloidea</taxon>
        <taxon>Mustelidae</taxon>
        <taxon>Mustelinae</taxon>
        <taxon>Neogale</taxon>
    </lineage>
</organism>
<proteinExistence type="evidence at transcript level"/>
<accession>P41693</accession>
<name>IL6_NEOVI</name>
<keyword id="KW-0011">Acute phase</keyword>
<keyword id="KW-0202">Cytokine</keyword>
<keyword id="KW-1015">Disulfide bond</keyword>
<keyword id="KW-0339">Growth factor</keyword>
<keyword id="KW-1185">Reference proteome</keyword>
<keyword id="KW-0964">Secreted</keyword>
<reference key="1">
    <citation type="submission" date="1994-07" db="EMBL/GenBank/DDBJ databases">
        <title>Antibody-dependent infection by Aleutian mink disease parvovirus stimulates interleukin-6 production: possible role in the pathogenesis of an immune complex disease.</title>
        <authorList>
            <person name="Kanno H."/>
            <person name="Bloom M.E."/>
            <person name="Perryman S.M."/>
            <person name="Wolfinbarger J.B."/>
        </authorList>
    </citation>
    <scope>NUCLEOTIDE SEQUENCE [MRNA]</scope>
</reference>
<sequence>AENNLKLPKLAEKDKCFQSQFNQETCMTRITTGLQEFQIHLKYLEANYEGNKNNAHSVYISTKHLLQKLRPMNQVEVTTPNPTTDSSLQALFKSQDKWLKHVTIHLILRSLEDFLQFSLRAIRIM</sequence>
<gene>
    <name type="primary">IL6</name>
</gene>